<comment type="function">
    <text evidence="2 5">Has bacteriolytic activity (By similarity). May play a role in digestion and in the host defense mechanisms against invading microbes (PubMed:16996284).</text>
</comment>
<comment type="catalytic activity">
    <reaction evidence="2">
        <text>Hydrolysis of (1-&gt;4)-beta-linkages between N-acetylmuramic acid and N-acetyl-D-glucosamine residues in a peptidoglycan and between N-acetyl-D-glucosamine residues in chitodextrins.</text>
        <dbReference type="EC" id="3.2.1.17"/>
    </reaction>
</comment>
<comment type="subcellular location">
    <subcellularLocation>
        <location evidence="1">Secreted</location>
    </subcellularLocation>
</comment>
<comment type="similarity">
    <text evidence="4">Belongs to the glycosyl hydrolase 22 family. Type-I lysozyme subfamily.</text>
</comment>
<gene>
    <name type="primary">lysoz</name>
</gene>
<sequence>MSAVLVLALVLLSLTCVTDAISDACLTCICKQESYGCTQIGCRMDGRSLSCGYFQIKKSYWIDCGRLGSSWEACADDYNCAVRCVRAYMKKYIGKSGCTANCKNYARLHNGGPKGCTKPSTLTYWNAVKNQGCSINS</sequence>
<name>LYS_OSTED</name>
<proteinExistence type="evidence at transcript level"/>
<reference key="1">
    <citation type="journal article" date="2006" name="Comp. Biochem. Physiol.">
        <title>Cloning of cDNAs and hybridization analysis of lysozymes from two oyster species, Crassostrea gigas and Ostrea edulis.</title>
        <authorList>
            <person name="Matsumoto T."/>
            <person name="Nakamura A.M."/>
            <person name="Takahashi K.G."/>
        </authorList>
    </citation>
    <scope>NUCLEOTIDE SEQUENCE [MRNA]</scope>
</reference>
<dbReference type="EC" id="3.2.1.17" evidence="2"/>
<dbReference type="EMBL" id="AB179776">
    <property type="protein sequence ID" value="BAD19060.1"/>
    <property type="molecule type" value="mRNA"/>
</dbReference>
<dbReference type="SMR" id="Q6L6Q5"/>
<dbReference type="CAZy" id="GH22">
    <property type="family name" value="Glycoside Hydrolase Family 22"/>
</dbReference>
<dbReference type="GO" id="GO:0005576">
    <property type="term" value="C:extracellular region"/>
    <property type="evidence" value="ECO:0007669"/>
    <property type="project" value="UniProtKB-SubCell"/>
</dbReference>
<dbReference type="GO" id="GO:0003796">
    <property type="term" value="F:lysozyme activity"/>
    <property type="evidence" value="ECO:0007669"/>
    <property type="project" value="UniProtKB-EC"/>
</dbReference>
<dbReference type="GO" id="GO:0042742">
    <property type="term" value="P:defense response to bacterium"/>
    <property type="evidence" value="ECO:0007669"/>
    <property type="project" value="UniProtKB-KW"/>
</dbReference>
<dbReference type="GO" id="GO:0031640">
    <property type="term" value="P:killing of cells of another organism"/>
    <property type="evidence" value="ECO:0007669"/>
    <property type="project" value="UniProtKB-KW"/>
</dbReference>
<dbReference type="Gene3D" id="1.10.530.10">
    <property type="match status" value="1"/>
</dbReference>
<dbReference type="InterPro" id="IPR008597">
    <property type="entry name" value="Invert_lysozyme"/>
</dbReference>
<dbReference type="InterPro" id="IPR023346">
    <property type="entry name" value="Lysozyme-like_dom_sf"/>
</dbReference>
<dbReference type="PANTHER" id="PTHR11195">
    <property type="entry name" value="DESTABILASE-RELATED"/>
    <property type="match status" value="1"/>
</dbReference>
<dbReference type="PANTHER" id="PTHR11195:SF13">
    <property type="entry name" value="INVERTEBRATE-TYPE LYSOZYME 2-RELATED"/>
    <property type="match status" value="1"/>
</dbReference>
<dbReference type="Pfam" id="PF05497">
    <property type="entry name" value="Destabilase"/>
    <property type="match status" value="1"/>
</dbReference>
<dbReference type="SUPFAM" id="SSF53955">
    <property type="entry name" value="Lysozyme-like"/>
    <property type="match status" value="1"/>
</dbReference>
<dbReference type="PROSITE" id="PS51909">
    <property type="entry name" value="LYSOZYME_I"/>
    <property type="match status" value="1"/>
</dbReference>
<accession>Q6L6Q5</accession>
<feature type="signal peptide" evidence="3">
    <location>
        <begin position="1"/>
        <end position="20"/>
    </location>
</feature>
<feature type="chain" id="PRO_0000280512" description="Lysozyme">
    <location>
        <begin position="21"/>
        <end position="137"/>
    </location>
</feature>
<feature type="domain" description="I-type lysozyme" evidence="4">
    <location>
        <begin position="21"/>
        <end position="134"/>
    </location>
</feature>
<feature type="active site" description="Proton donor" evidence="4">
    <location>
        <position position="33"/>
    </location>
</feature>
<feature type="active site" description="Nucleophile" evidence="4">
    <location>
        <position position="45"/>
    </location>
</feature>
<feature type="binding site" evidence="2">
    <location>
        <begin position="57"/>
        <end position="63"/>
    </location>
    <ligand>
        <name>substrate</name>
    </ligand>
</feature>
<feature type="binding site" evidence="2">
    <location>
        <position position="88"/>
    </location>
    <ligand>
        <name>substrate</name>
    </ligand>
</feature>
<feature type="binding site" evidence="2">
    <location>
        <begin position="109"/>
        <end position="111"/>
    </location>
    <ligand>
        <name>substrate</name>
    </ligand>
</feature>
<feature type="disulfide bond" evidence="4">
    <location>
        <begin position="25"/>
        <end position="102"/>
    </location>
</feature>
<feature type="disulfide bond" evidence="4">
    <location>
        <begin position="30"/>
        <end position="37"/>
    </location>
</feature>
<feature type="disulfide bond" evidence="4">
    <location>
        <begin position="42"/>
        <end position="51"/>
    </location>
</feature>
<feature type="disulfide bond" evidence="4">
    <location>
        <begin position="64"/>
        <end position="84"/>
    </location>
</feature>
<feature type="disulfide bond" evidence="4">
    <location>
        <begin position="74"/>
        <end position="80"/>
    </location>
</feature>
<feature type="disulfide bond" evidence="4">
    <location>
        <begin position="98"/>
        <end position="116"/>
    </location>
</feature>
<keyword id="KW-0044">Antibiotic</keyword>
<keyword id="KW-0929">Antimicrobial</keyword>
<keyword id="KW-0081">Bacteriolytic enzyme</keyword>
<keyword id="KW-1015">Disulfide bond</keyword>
<keyword id="KW-0326">Glycosidase</keyword>
<keyword id="KW-0378">Hydrolase</keyword>
<keyword id="KW-0964">Secreted</keyword>
<keyword id="KW-0732">Signal</keyword>
<evidence type="ECO:0000250" key="1">
    <source>
        <dbReference type="UniProtKB" id="P83673"/>
    </source>
</evidence>
<evidence type="ECO:0000250" key="2">
    <source>
        <dbReference type="UniProtKB" id="Q8IU26"/>
    </source>
</evidence>
<evidence type="ECO:0000255" key="3"/>
<evidence type="ECO:0000255" key="4">
    <source>
        <dbReference type="PROSITE-ProRule" id="PRU01257"/>
    </source>
</evidence>
<evidence type="ECO:0000303" key="5">
    <source>
    </source>
</evidence>
<evidence type="ECO:0000305" key="6"/>
<protein>
    <recommendedName>
        <fullName>Lysozyme</fullName>
        <ecNumber evidence="2">3.2.1.17</ecNumber>
    </recommendedName>
    <alternativeName>
        <fullName>1,4-beta-N-acetylmuramidase</fullName>
    </alternativeName>
    <alternativeName>
        <fullName evidence="6">Invertebrate-type lysozyme</fullName>
    </alternativeName>
</protein>
<organism>
    <name type="scientific">Ostrea edulis</name>
    <name type="common">Native oyster</name>
    <name type="synonym">European flat oyster</name>
    <dbReference type="NCBI Taxonomy" id="37623"/>
    <lineage>
        <taxon>Eukaryota</taxon>
        <taxon>Metazoa</taxon>
        <taxon>Spiralia</taxon>
        <taxon>Lophotrochozoa</taxon>
        <taxon>Mollusca</taxon>
        <taxon>Bivalvia</taxon>
        <taxon>Autobranchia</taxon>
        <taxon>Pteriomorphia</taxon>
        <taxon>Ostreida</taxon>
        <taxon>Ostreoidea</taxon>
        <taxon>Ostreidae</taxon>
        <taxon>Ostrea</taxon>
    </lineage>
</organism>